<dbReference type="EMBL" id="U70859">
    <property type="protein sequence ID" value="AAB09593.1"/>
    <property type="molecule type" value="mRNA"/>
</dbReference>
<dbReference type="EMBL" id="AK077593">
    <property type="protein sequence ID" value="BAC36884.1"/>
    <property type="molecule type" value="mRNA"/>
</dbReference>
<dbReference type="EMBL" id="AL672308">
    <property type="status" value="NOT_ANNOTATED_CDS"/>
    <property type="molecule type" value="Genomic_DNA"/>
</dbReference>
<dbReference type="EMBL" id="BC050195">
    <property type="protein sequence ID" value="AAH50195.1"/>
    <property type="molecule type" value="mRNA"/>
</dbReference>
<dbReference type="CCDS" id="CCDS30309.1"/>
<dbReference type="RefSeq" id="NP_001288769.1">
    <property type="nucleotide sequence ID" value="NM_001301840.1"/>
</dbReference>
<dbReference type="RefSeq" id="NP_031541.1">
    <property type="nucleotide sequence ID" value="NM_007515.3"/>
</dbReference>
<dbReference type="RefSeq" id="XP_006527816.1">
    <property type="nucleotide sequence ID" value="XM_006527753.3"/>
</dbReference>
<dbReference type="RefSeq" id="XP_011245812.1">
    <property type="nucleotide sequence ID" value="XM_011247510.1"/>
</dbReference>
<dbReference type="RefSeq" id="XP_011245813.1">
    <property type="nucleotide sequence ID" value="XM_011247511.1"/>
</dbReference>
<dbReference type="RefSeq" id="XP_011245814.1">
    <property type="nucleotide sequence ID" value="XM_011247512.1"/>
</dbReference>
<dbReference type="RefSeq" id="XP_011245815.1">
    <property type="nucleotide sequence ID" value="XM_011247513.2"/>
</dbReference>
<dbReference type="RefSeq" id="XP_017173852.1">
    <property type="nucleotide sequence ID" value="XM_017318363.1"/>
</dbReference>
<dbReference type="RefSeq" id="XP_017173853.1">
    <property type="nucleotide sequence ID" value="XM_017318364.1"/>
</dbReference>
<dbReference type="RefSeq" id="XP_036017684.1">
    <property type="nucleotide sequence ID" value="XM_036161791.1"/>
</dbReference>
<dbReference type="RefSeq" id="XP_036017685.1">
    <property type="nucleotide sequence ID" value="XM_036161792.1"/>
</dbReference>
<dbReference type="RefSeq" id="XP_036017686.1">
    <property type="nucleotide sequence ID" value="XM_036161793.1"/>
</dbReference>
<dbReference type="SMR" id="P70423"/>
<dbReference type="BioGRID" id="198277">
    <property type="interactions" value="2"/>
</dbReference>
<dbReference type="FunCoup" id="P70423">
    <property type="interactions" value="98"/>
</dbReference>
<dbReference type="IntAct" id="P70423">
    <property type="interactions" value="1"/>
</dbReference>
<dbReference type="STRING" id="10090.ENSMUSP00000109339"/>
<dbReference type="TCDB" id="2.A.3.3.5">
    <property type="family name" value="the amino acid-polyamine-organocation (apc) family"/>
</dbReference>
<dbReference type="GlyCosmos" id="P70423">
    <property type="glycosylation" value="1 site, No reported glycans"/>
</dbReference>
<dbReference type="GlyGen" id="P70423">
    <property type="glycosylation" value="2 sites"/>
</dbReference>
<dbReference type="iPTMnet" id="P70423"/>
<dbReference type="PhosphoSitePlus" id="P70423"/>
<dbReference type="SwissPalm" id="P70423"/>
<dbReference type="PaxDb" id="10090-ENSMUSP00000098914"/>
<dbReference type="PeptideAtlas" id="P70423"/>
<dbReference type="ProteomicsDB" id="285222"/>
<dbReference type="Antibodypedia" id="586">
    <property type="antibodies" value="68 antibodies from 19 providers"/>
</dbReference>
<dbReference type="DNASU" id="11989"/>
<dbReference type="Ensembl" id="ENSMUST00000073927.5">
    <property type="protein sequence ID" value="ENSMUSP00000073582.5"/>
    <property type="gene ID" value="ENSMUSG00000031297.15"/>
</dbReference>
<dbReference type="Ensembl" id="ENSMUST00000101362.8">
    <property type="protein sequence ID" value="ENSMUSP00000098914.2"/>
    <property type="gene ID" value="ENSMUSG00000031297.15"/>
</dbReference>
<dbReference type="Ensembl" id="ENSMUST00000113710.8">
    <property type="protein sequence ID" value="ENSMUSP00000109339.2"/>
    <property type="gene ID" value="ENSMUSG00000031297.15"/>
</dbReference>
<dbReference type="GeneID" id="11989"/>
<dbReference type="KEGG" id="mmu:11989"/>
<dbReference type="UCSC" id="uc009twt.2">
    <property type="organism name" value="mouse"/>
</dbReference>
<dbReference type="AGR" id="MGI:1100521"/>
<dbReference type="CTD" id="84889"/>
<dbReference type="MGI" id="MGI:1100521">
    <property type="gene designation" value="Slc7a3"/>
</dbReference>
<dbReference type="VEuPathDB" id="HostDB:ENSMUSG00000031297"/>
<dbReference type="eggNOG" id="KOG1286">
    <property type="taxonomic scope" value="Eukaryota"/>
</dbReference>
<dbReference type="GeneTree" id="ENSGT00940000154651"/>
<dbReference type="HOGENOM" id="CLU_007946_15_7_1"/>
<dbReference type="InParanoid" id="P70423"/>
<dbReference type="OMA" id="WQLTMIS"/>
<dbReference type="OrthoDB" id="3900342at2759"/>
<dbReference type="PhylomeDB" id="P70423"/>
<dbReference type="TreeFam" id="TF315212"/>
<dbReference type="Reactome" id="R-MMU-352230">
    <property type="pathway name" value="Amino acid transport across the plasma membrane"/>
</dbReference>
<dbReference type="BioGRID-ORCS" id="11989">
    <property type="hits" value="1 hit in 77 CRISPR screens"/>
</dbReference>
<dbReference type="PRO" id="PR:P70423"/>
<dbReference type="Proteomes" id="UP000000589">
    <property type="component" value="Chromosome X"/>
</dbReference>
<dbReference type="RNAct" id="P70423">
    <property type="molecule type" value="protein"/>
</dbReference>
<dbReference type="Bgee" id="ENSMUSG00000031297">
    <property type="expression patterns" value="Expressed in epiblast (generic) and 115 other cell types or tissues"/>
</dbReference>
<dbReference type="GO" id="GO:0005886">
    <property type="term" value="C:plasma membrane"/>
    <property type="evidence" value="ECO:0007669"/>
    <property type="project" value="UniProtKB-SubCell"/>
</dbReference>
<dbReference type="GO" id="GO:0015174">
    <property type="term" value="F:basic amino acid transmembrane transporter activity"/>
    <property type="evidence" value="ECO:0000314"/>
    <property type="project" value="MGI"/>
</dbReference>
<dbReference type="GO" id="GO:0061459">
    <property type="term" value="F:L-arginine transmembrane transporter activity"/>
    <property type="evidence" value="ECO:0000314"/>
    <property type="project" value="MGI"/>
</dbReference>
<dbReference type="GO" id="GO:0015189">
    <property type="term" value="F:L-lysine transmembrane transporter activity"/>
    <property type="evidence" value="ECO:0000314"/>
    <property type="project" value="MGI"/>
</dbReference>
<dbReference type="GO" id="GO:0000064">
    <property type="term" value="F:L-ornithine transmembrane transporter activity"/>
    <property type="evidence" value="ECO:0007669"/>
    <property type="project" value="Ensembl"/>
</dbReference>
<dbReference type="GO" id="GO:0097638">
    <property type="term" value="P:L-arginine import across plasma membrane"/>
    <property type="evidence" value="ECO:0007669"/>
    <property type="project" value="Ensembl"/>
</dbReference>
<dbReference type="GO" id="GO:1903826">
    <property type="term" value="P:L-arginine transmembrane transport"/>
    <property type="evidence" value="ECO:0000314"/>
    <property type="project" value="MGI"/>
</dbReference>
<dbReference type="GO" id="GO:0097639">
    <property type="term" value="P:L-lysine import across plasma membrane"/>
    <property type="evidence" value="ECO:0007669"/>
    <property type="project" value="Ensembl"/>
</dbReference>
<dbReference type="GO" id="GO:1903401">
    <property type="term" value="P:L-lysine transmembrane transport"/>
    <property type="evidence" value="ECO:0000314"/>
    <property type="project" value="UniProtKB"/>
</dbReference>
<dbReference type="GO" id="GO:0097640">
    <property type="term" value="P:L-ornithine import across plasma membrane"/>
    <property type="evidence" value="ECO:0007669"/>
    <property type="project" value="Ensembl"/>
</dbReference>
<dbReference type="FunFam" id="1.20.1740.10:FF:000024">
    <property type="entry name" value="High affinity cationic amino acid transporter 1"/>
    <property type="match status" value="1"/>
</dbReference>
<dbReference type="FunFam" id="1.20.1740.10:FF:000009">
    <property type="entry name" value="Low affinity cationic amino acid transporter 2"/>
    <property type="match status" value="1"/>
</dbReference>
<dbReference type="Gene3D" id="1.20.1740.10">
    <property type="entry name" value="Amino acid/polyamine transporter I"/>
    <property type="match status" value="1"/>
</dbReference>
<dbReference type="InterPro" id="IPR002293">
    <property type="entry name" value="AA/rel_permease1"/>
</dbReference>
<dbReference type="InterPro" id="IPR004755">
    <property type="entry name" value="Cat_AA_permease"/>
</dbReference>
<dbReference type="InterPro" id="IPR029485">
    <property type="entry name" value="CAT_C"/>
</dbReference>
<dbReference type="NCBIfam" id="TIGR00906">
    <property type="entry name" value="2A0303"/>
    <property type="match status" value="1"/>
</dbReference>
<dbReference type="PANTHER" id="PTHR43243:SF104">
    <property type="entry name" value="CATIONIC AMINO ACID TRANSPORTER 3"/>
    <property type="match status" value="1"/>
</dbReference>
<dbReference type="PANTHER" id="PTHR43243">
    <property type="entry name" value="INNER MEMBRANE TRANSPORTER YGJI-RELATED"/>
    <property type="match status" value="1"/>
</dbReference>
<dbReference type="Pfam" id="PF13520">
    <property type="entry name" value="AA_permease_2"/>
    <property type="match status" value="1"/>
</dbReference>
<dbReference type="Pfam" id="PF13906">
    <property type="entry name" value="AA_permease_C"/>
    <property type="match status" value="1"/>
</dbReference>
<dbReference type="PIRSF" id="PIRSF006060">
    <property type="entry name" value="AA_transporter"/>
    <property type="match status" value="1"/>
</dbReference>
<proteinExistence type="evidence at protein level"/>
<reference key="1">
    <citation type="journal article" date="1997" name="J. Biol. Chem.">
        <title>A new member of the cationic amino acid transporter family is preferentially expressed in adult mouse brain.</title>
        <authorList>
            <person name="Ito K."/>
            <person name="Groudine M."/>
        </authorList>
    </citation>
    <scope>NUCLEOTIDE SEQUENCE [MRNA]</scope>
    <scope>FUNCTION</scope>
    <scope>TRANSPORTER ACTIVITY</scope>
    <scope>BIOPHYSICOCHEMICAL PROPERTIES</scope>
    <scope>TISSUE SPECIFICITY</scope>
    <source>
        <tissue>Embryo</tissue>
    </source>
</reference>
<reference key="2">
    <citation type="journal article" date="2005" name="Science">
        <title>The transcriptional landscape of the mammalian genome.</title>
        <authorList>
            <person name="Carninci P."/>
            <person name="Kasukawa T."/>
            <person name="Katayama S."/>
            <person name="Gough J."/>
            <person name="Frith M.C."/>
            <person name="Maeda N."/>
            <person name="Oyama R."/>
            <person name="Ravasi T."/>
            <person name="Lenhard B."/>
            <person name="Wells C."/>
            <person name="Kodzius R."/>
            <person name="Shimokawa K."/>
            <person name="Bajic V.B."/>
            <person name="Brenner S.E."/>
            <person name="Batalov S."/>
            <person name="Forrest A.R."/>
            <person name="Zavolan M."/>
            <person name="Davis M.J."/>
            <person name="Wilming L.G."/>
            <person name="Aidinis V."/>
            <person name="Allen J.E."/>
            <person name="Ambesi-Impiombato A."/>
            <person name="Apweiler R."/>
            <person name="Aturaliya R.N."/>
            <person name="Bailey T.L."/>
            <person name="Bansal M."/>
            <person name="Baxter L."/>
            <person name="Beisel K.W."/>
            <person name="Bersano T."/>
            <person name="Bono H."/>
            <person name="Chalk A.M."/>
            <person name="Chiu K.P."/>
            <person name="Choudhary V."/>
            <person name="Christoffels A."/>
            <person name="Clutterbuck D.R."/>
            <person name="Crowe M.L."/>
            <person name="Dalla E."/>
            <person name="Dalrymple B.P."/>
            <person name="de Bono B."/>
            <person name="Della Gatta G."/>
            <person name="di Bernardo D."/>
            <person name="Down T."/>
            <person name="Engstrom P."/>
            <person name="Fagiolini M."/>
            <person name="Faulkner G."/>
            <person name="Fletcher C.F."/>
            <person name="Fukushima T."/>
            <person name="Furuno M."/>
            <person name="Futaki S."/>
            <person name="Gariboldi M."/>
            <person name="Georgii-Hemming P."/>
            <person name="Gingeras T.R."/>
            <person name="Gojobori T."/>
            <person name="Green R.E."/>
            <person name="Gustincich S."/>
            <person name="Harbers M."/>
            <person name="Hayashi Y."/>
            <person name="Hensch T.K."/>
            <person name="Hirokawa N."/>
            <person name="Hill D."/>
            <person name="Huminiecki L."/>
            <person name="Iacono M."/>
            <person name="Ikeo K."/>
            <person name="Iwama A."/>
            <person name="Ishikawa T."/>
            <person name="Jakt M."/>
            <person name="Kanapin A."/>
            <person name="Katoh M."/>
            <person name="Kawasawa Y."/>
            <person name="Kelso J."/>
            <person name="Kitamura H."/>
            <person name="Kitano H."/>
            <person name="Kollias G."/>
            <person name="Krishnan S.P."/>
            <person name="Kruger A."/>
            <person name="Kummerfeld S.K."/>
            <person name="Kurochkin I.V."/>
            <person name="Lareau L.F."/>
            <person name="Lazarevic D."/>
            <person name="Lipovich L."/>
            <person name="Liu J."/>
            <person name="Liuni S."/>
            <person name="McWilliam S."/>
            <person name="Madan Babu M."/>
            <person name="Madera M."/>
            <person name="Marchionni L."/>
            <person name="Matsuda H."/>
            <person name="Matsuzawa S."/>
            <person name="Miki H."/>
            <person name="Mignone F."/>
            <person name="Miyake S."/>
            <person name="Morris K."/>
            <person name="Mottagui-Tabar S."/>
            <person name="Mulder N."/>
            <person name="Nakano N."/>
            <person name="Nakauchi H."/>
            <person name="Ng P."/>
            <person name="Nilsson R."/>
            <person name="Nishiguchi S."/>
            <person name="Nishikawa S."/>
            <person name="Nori F."/>
            <person name="Ohara O."/>
            <person name="Okazaki Y."/>
            <person name="Orlando V."/>
            <person name="Pang K.C."/>
            <person name="Pavan W.J."/>
            <person name="Pavesi G."/>
            <person name="Pesole G."/>
            <person name="Petrovsky N."/>
            <person name="Piazza S."/>
            <person name="Reed J."/>
            <person name="Reid J.F."/>
            <person name="Ring B.Z."/>
            <person name="Ringwald M."/>
            <person name="Rost B."/>
            <person name="Ruan Y."/>
            <person name="Salzberg S.L."/>
            <person name="Sandelin A."/>
            <person name="Schneider C."/>
            <person name="Schoenbach C."/>
            <person name="Sekiguchi K."/>
            <person name="Semple C.A."/>
            <person name="Seno S."/>
            <person name="Sessa L."/>
            <person name="Sheng Y."/>
            <person name="Shibata Y."/>
            <person name="Shimada H."/>
            <person name="Shimada K."/>
            <person name="Silva D."/>
            <person name="Sinclair B."/>
            <person name="Sperling S."/>
            <person name="Stupka E."/>
            <person name="Sugiura K."/>
            <person name="Sultana R."/>
            <person name="Takenaka Y."/>
            <person name="Taki K."/>
            <person name="Tammoja K."/>
            <person name="Tan S.L."/>
            <person name="Tang S."/>
            <person name="Taylor M.S."/>
            <person name="Tegner J."/>
            <person name="Teichmann S.A."/>
            <person name="Ueda H.R."/>
            <person name="van Nimwegen E."/>
            <person name="Verardo R."/>
            <person name="Wei C.L."/>
            <person name="Yagi K."/>
            <person name="Yamanishi H."/>
            <person name="Zabarovsky E."/>
            <person name="Zhu S."/>
            <person name="Zimmer A."/>
            <person name="Hide W."/>
            <person name="Bult C."/>
            <person name="Grimmond S.M."/>
            <person name="Teasdale R.D."/>
            <person name="Liu E.T."/>
            <person name="Brusic V."/>
            <person name="Quackenbush J."/>
            <person name="Wahlestedt C."/>
            <person name="Mattick J.S."/>
            <person name="Hume D.A."/>
            <person name="Kai C."/>
            <person name="Sasaki D."/>
            <person name="Tomaru Y."/>
            <person name="Fukuda S."/>
            <person name="Kanamori-Katayama M."/>
            <person name="Suzuki M."/>
            <person name="Aoki J."/>
            <person name="Arakawa T."/>
            <person name="Iida J."/>
            <person name="Imamura K."/>
            <person name="Itoh M."/>
            <person name="Kato T."/>
            <person name="Kawaji H."/>
            <person name="Kawagashira N."/>
            <person name="Kawashima T."/>
            <person name="Kojima M."/>
            <person name="Kondo S."/>
            <person name="Konno H."/>
            <person name="Nakano K."/>
            <person name="Ninomiya N."/>
            <person name="Nishio T."/>
            <person name="Okada M."/>
            <person name="Plessy C."/>
            <person name="Shibata K."/>
            <person name="Shiraki T."/>
            <person name="Suzuki S."/>
            <person name="Tagami M."/>
            <person name="Waki K."/>
            <person name="Watahiki A."/>
            <person name="Okamura-Oho Y."/>
            <person name="Suzuki H."/>
            <person name="Kawai J."/>
            <person name="Hayashizaki Y."/>
        </authorList>
    </citation>
    <scope>NUCLEOTIDE SEQUENCE [LARGE SCALE MRNA]</scope>
    <source>
        <strain>C57BL/6J</strain>
        <tissue>Embryo</tissue>
    </source>
</reference>
<reference key="3">
    <citation type="journal article" date="2009" name="PLoS Biol.">
        <title>Lineage-specific biology revealed by a finished genome assembly of the mouse.</title>
        <authorList>
            <person name="Church D.M."/>
            <person name="Goodstadt L."/>
            <person name="Hillier L.W."/>
            <person name="Zody M.C."/>
            <person name="Goldstein S."/>
            <person name="She X."/>
            <person name="Bult C.J."/>
            <person name="Agarwala R."/>
            <person name="Cherry J.L."/>
            <person name="DiCuccio M."/>
            <person name="Hlavina W."/>
            <person name="Kapustin Y."/>
            <person name="Meric P."/>
            <person name="Maglott D."/>
            <person name="Birtle Z."/>
            <person name="Marques A.C."/>
            <person name="Graves T."/>
            <person name="Zhou S."/>
            <person name="Teague B."/>
            <person name="Potamousis K."/>
            <person name="Churas C."/>
            <person name="Place M."/>
            <person name="Herschleb J."/>
            <person name="Runnheim R."/>
            <person name="Forrest D."/>
            <person name="Amos-Landgraf J."/>
            <person name="Schwartz D.C."/>
            <person name="Cheng Z."/>
            <person name="Lindblad-Toh K."/>
            <person name="Eichler E.E."/>
            <person name="Ponting C.P."/>
        </authorList>
    </citation>
    <scope>NUCLEOTIDE SEQUENCE [LARGE SCALE GENOMIC DNA]</scope>
    <source>
        <strain>C57BL/6J</strain>
    </source>
</reference>
<reference key="4">
    <citation type="journal article" date="2004" name="Genome Res.">
        <title>The status, quality, and expansion of the NIH full-length cDNA project: the Mammalian Gene Collection (MGC).</title>
        <authorList>
            <consortium name="The MGC Project Team"/>
        </authorList>
    </citation>
    <scope>NUCLEOTIDE SEQUENCE [LARGE SCALE MRNA]</scope>
    <source>
        <strain>129/Sv X 129SvCp</strain>
        <tissue>Embryonic stem cell</tissue>
    </source>
</reference>
<name>CTR3_MOUSE</name>
<feature type="chain" id="PRO_0000054267" description="Cationic amino acid transporter 3">
    <location>
        <begin position="1"/>
        <end position="618"/>
    </location>
</feature>
<feature type="topological domain" description="Cytoplasmic" evidence="2">
    <location>
        <begin position="1"/>
        <end position="36"/>
    </location>
</feature>
<feature type="transmembrane region" description="Helical; Name=1" evidence="2">
    <location>
        <begin position="37"/>
        <end position="57"/>
    </location>
</feature>
<feature type="topological domain" description="Extracellular" evidence="2">
    <location>
        <begin position="58"/>
        <end position="61"/>
    </location>
</feature>
<feature type="transmembrane region" description="Helical; Name=2" evidence="2">
    <location>
        <begin position="62"/>
        <end position="82"/>
    </location>
</feature>
<feature type="topological domain" description="Cytoplasmic" evidence="2">
    <location>
        <begin position="83"/>
        <end position="107"/>
    </location>
</feature>
<feature type="transmembrane region" description="Helical; Name=3" evidence="2">
    <location>
        <begin position="108"/>
        <end position="128"/>
    </location>
</feature>
<feature type="topological domain" description="Extracellular" evidence="2">
    <location>
        <begin position="129"/>
        <end position="162"/>
    </location>
</feature>
<feature type="transmembrane region" description="Helical; Name=4" evidence="2">
    <location>
        <begin position="163"/>
        <end position="183"/>
    </location>
</feature>
<feature type="topological domain" description="Cytoplasmic" evidence="2">
    <location>
        <begin position="184"/>
        <end position="191"/>
    </location>
</feature>
<feature type="transmembrane region" description="Helical; Name=5" evidence="2">
    <location>
        <begin position="192"/>
        <end position="212"/>
    </location>
</feature>
<feature type="topological domain" description="Extracellular" evidence="2">
    <location>
        <begin position="213"/>
        <end position="244"/>
    </location>
</feature>
<feature type="transmembrane region" description="Helical; Name=6" evidence="2">
    <location>
        <begin position="245"/>
        <end position="265"/>
    </location>
</feature>
<feature type="topological domain" description="Cytoplasmic" evidence="2">
    <location>
        <begin position="266"/>
        <end position="285"/>
    </location>
</feature>
<feature type="transmembrane region" description="Helical; Name=7" evidence="2">
    <location>
        <begin position="286"/>
        <end position="306"/>
    </location>
</feature>
<feature type="topological domain" description="Extracellular" evidence="2">
    <location>
        <begin position="307"/>
        <end position="335"/>
    </location>
</feature>
<feature type="transmembrane region" description="Helical; Name=8" evidence="2">
    <location>
        <begin position="336"/>
        <end position="356"/>
    </location>
</feature>
<feature type="topological domain" description="Cytoplasmic" evidence="2">
    <location>
        <begin position="357"/>
        <end position="380"/>
    </location>
</feature>
<feature type="transmembrane region" description="Helical; Name=9" evidence="2">
    <location>
        <begin position="381"/>
        <end position="401"/>
    </location>
</feature>
<feature type="topological domain" description="Extracellular" evidence="2">
    <location>
        <begin position="402"/>
        <end position="406"/>
    </location>
</feature>
<feature type="transmembrane region" description="Helical; Name=10" evidence="2">
    <location>
        <begin position="407"/>
        <end position="427"/>
    </location>
</feature>
<feature type="topological domain" description="Cytoplasmic" evidence="2">
    <location>
        <begin position="428"/>
        <end position="474"/>
    </location>
</feature>
<feature type="transmembrane region" description="Helical; Name=11" evidence="2">
    <location>
        <begin position="475"/>
        <end position="495"/>
    </location>
</feature>
<feature type="topological domain" description="Extracellular" evidence="2">
    <location>
        <begin position="496"/>
        <end position="506"/>
    </location>
</feature>
<feature type="transmembrane region" description="Helical; Name=12" evidence="2">
    <location>
        <begin position="507"/>
        <end position="527"/>
    </location>
</feature>
<feature type="topological domain" description="Cytoplasmic" evidence="2">
    <location>
        <begin position="528"/>
        <end position="539"/>
    </location>
</feature>
<feature type="transmembrane region" description="Helical; Name=13" evidence="2">
    <location>
        <begin position="540"/>
        <end position="560"/>
    </location>
</feature>
<feature type="topological domain" description="Extracellular" evidence="2">
    <location>
        <begin position="561"/>
        <end position="568"/>
    </location>
</feature>
<feature type="transmembrane region" description="Helical; Name=14" evidence="2">
    <location>
        <begin position="569"/>
        <end position="589"/>
    </location>
</feature>
<feature type="topological domain" description="Cytoplasmic" evidence="2">
    <location>
        <begin position="590"/>
        <end position="618"/>
    </location>
</feature>
<feature type="modified residue" description="Phosphothreonine" evidence="1">
    <location>
        <position position="605"/>
    </location>
</feature>
<feature type="modified residue" description="Phosphoserine" evidence="1">
    <location>
        <position position="617"/>
    </location>
</feature>
<feature type="glycosylation site" description="N-linked (GlcNAc...) asparagine" evidence="2">
    <location>
        <position position="232"/>
    </location>
</feature>
<sequence length="618" mass="67460">MLWQALRRFGQKLVRRRVLELGMGETRLARCLSTLDLVALGVGSTLGAGVYVLAGEVAKDKAGPSIVICFLVAALSSVLAGLCYAEFGARVPGSGSAYLYSYVTVGELWAFTTGWNLILSYVIGTASVARAWSSAFDNLIGNHISRTLKGTILLKMPHVLAEYPDFFALALVLLLTGLLVLGASKSALVTKVFTGMNLLVLSFVIISGFIKGELRNWKLTKEDYCLTMSESNGTCSLDSMGSGGFMPFGLEGILRGAATCFYAFVGFDCIATTGEEAQNPQRSIPMGIVISMFICFLAYFGVSSALTLMMPYYKLHPESPLPEAFSYVGWEPARYLVAIGSLCALSTSLLGSMFPMPRVMYSMAEDGLLFRVLAKVHSVTHIPIVATLVSGVIAAFMAFLFELTDLVDLMSIGTLLAHSLVSICVLILRYQPDQEMKSVEEEMELQEETLEAEKLTVQALFCPVNSIPTLLSGRVVYVCSSLLAVLLTVLCLVLTWWTTPLRSGDPVWVTVVVLILGLILAISGVIWRQPQNRTPLHFKVPAVPLLPLVSIFVNVYLMMQMTAGTWARFGIWMLIGFAIYFGYGIQHSMKEVKNHQTLPKTRAQTIDLDLTTSCVHSI</sequence>
<organism>
    <name type="scientific">Mus musculus</name>
    <name type="common">Mouse</name>
    <dbReference type="NCBI Taxonomy" id="10090"/>
    <lineage>
        <taxon>Eukaryota</taxon>
        <taxon>Metazoa</taxon>
        <taxon>Chordata</taxon>
        <taxon>Craniata</taxon>
        <taxon>Vertebrata</taxon>
        <taxon>Euteleostomi</taxon>
        <taxon>Mammalia</taxon>
        <taxon>Eutheria</taxon>
        <taxon>Euarchontoglires</taxon>
        <taxon>Glires</taxon>
        <taxon>Rodentia</taxon>
        <taxon>Myomorpha</taxon>
        <taxon>Muroidea</taxon>
        <taxon>Muridae</taxon>
        <taxon>Murinae</taxon>
        <taxon>Mus</taxon>
        <taxon>Mus</taxon>
    </lineage>
</organism>
<protein>
    <recommendedName>
        <fullName evidence="4">Cationic amino acid transporter 3</fullName>
        <shortName>CAT-3</shortName>
        <shortName>CAT3</shortName>
    </recommendedName>
    <alternativeName>
        <fullName>Cationic amino acid transporter y+</fullName>
    </alternativeName>
    <alternativeName>
        <fullName>Solute carrier family 7 member 3</fullName>
    </alternativeName>
</protein>
<comment type="function">
    <text evidence="3">Uniporter that mediates the uptake of cationic L-amino acids such as L-arginine, L-lysine and L-ornithine (PubMed:9334265). The transport is sodium ions- and pH-independent, moderately trans-stimulated and is mediated by passive diffusion (PubMed:9334265).</text>
</comment>
<comment type="catalytic activity">
    <reaction evidence="3">
        <text>L-arginine(in) = L-arginine(out)</text>
        <dbReference type="Rhea" id="RHEA:32143"/>
        <dbReference type="ChEBI" id="CHEBI:32682"/>
    </reaction>
</comment>
<comment type="catalytic activity">
    <reaction evidence="3">
        <text>L-lysine(in) = L-lysine(out)</text>
        <dbReference type="Rhea" id="RHEA:70935"/>
        <dbReference type="ChEBI" id="CHEBI:32551"/>
    </reaction>
</comment>
<comment type="catalytic activity">
    <reaction evidence="1">
        <text>L-ornithine(in) = L-ornithine(out)</text>
        <dbReference type="Rhea" id="RHEA:71199"/>
        <dbReference type="ChEBI" id="CHEBI:46911"/>
    </reaction>
</comment>
<comment type="biophysicochemical properties">
    <kinetics>
        <KM evidence="3">110 uM for L-lysine</KM>
        <KM evidence="3">100 uM for L-arginine</KM>
    </kinetics>
</comment>
<comment type="subcellular location">
    <subcellularLocation>
        <location>Cell membrane</location>
        <topology>Multi-pass membrane protein</topology>
    </subcellularLocation>
</comment>
<comment type="tissue specificity">
    <text evidence="3">Expressed in adult brain and in a wide variety of embryonic tissues.</text>
</comment>
<comment type="PTM">
    <text evidence="1">N-glycosylated.</text>
</comment>
<comment type="similarity">
    <text evidence="4">Belongs to the amino acid-polyamine-organocation (APC) superfamily. Cationic amino acid transporter (CAT) (TC 2.A.3.3) family.</text>
</comment>
<gene>
    <name evidence="5" type="primary">Slc7a3</name>
    <name type="synonym">Atrc3</name>
    <name type="synonym">Cat3</name>
</gene>
<evidence type="ECO:0000250" key="1">
    <source>
        <dbReference type="UniProtKB" id="Q8WY07"/>
    </source>
</evidence>
<evidence type="ECO:0000255" key="2"/>
<evidence type="ECO:0000269" key="3">
    <source>
    </source>
</evidence>
<evidence type="ECO:0000305" key="4"/>
<evidence type="ECO:0000312" key="5">
    <source>
        <dbReference type="MGI" id="MGI:1100521"/>
    </source>
</evidence>
<keyword id="KW-0029">Amino-acid transport</keyword>
<keyword id="KW-1003">Cell membrane</keyword>
<keyword id="KW-0325">Glycoprotein</keyword>
<keyword id="KW-0472">Membrane</keyword>
<keyword id="KW-0597">Phosphoprotein</keyword>
<keyword id="KW-1185">Reference proteome</keyword>
<keyword id="KW-0812">Transmembrane</keyword>
<keyword id="KW-1133">Transmembrane helix</keyword>
<keyword id="KW-0813">Transport</keyword>
<accession>P70423</accession>
<accession>B1AVE2</accession>